<name>Y4066_BACC3</name>
<accession>C1EPX5</accession>
<protein>
    <recommendedName>
        <fullName evidence="1">UPF0223 protein BCA_4066</fullName>
    </recommendedName>
</protein>
<dbReference type="EMBL" id="CP001407">
    <property type="protein sequence ID" value="ACO26979.1"/>
    <property type="molecule type" value="Genomic_DNA"/>
</dbReference>
<dbReference type="RefSeq" id="WP_000456558.1">
    <property type="nucleotide sequence ID" value="NZ_CP009318.1"/>
</dbReference>
<dbReference type="SMR" id="C1EPX5"/>
<dbReference type="KEGG" id="bcx:BCA_4066"/>
<dbReference type="PATRIC" id="fig|572264.18.peg.4018"/>
<dbReference type="Proteomes" id="UP000002210">
    <property type="component" value="Chromosome"/>
</dbReference>
<dbReference type="Gene3D" id="1.10.220.80">
    <property type="entry name" value="BH2638-like"/>
    <property type="match status" value="1"/>
</dbReference>
<dbReference type="HAMAP" id="MF_01041">
    <property type="entry name" value="UPF0223"/>
    <property type="match status" value="1"/>
</dbReference>
<dbReference type="InterPro" id="IPR023324">
    <property type="entry name" value="BH2638-like_sf"/>
</dbReference>
<dbReference type="InterPro" id="IPR007920">
    <property type="entry name" value="UPF0223"/>
</dbReference>
<dbReference type="NCBIfam" id="NF003353">
    <property type="entry name" value="PRK04387.1"/>
    <property type="match status" value="1"/>
</dbReference>
<dbReference type="Pfam" id="PF05256">
    <property type="entry name" value="UPF0223"/>
    <property type="match status" value="1"/>
</dbReference>
<dbReference type="PIRSF" id="PIRSF037260">
    <property type="entry name" value="UPF0223"/>
    <property type="match status" value="1"/>
</dbReference>
<dbReference type="SUPFAM" id="SSF158504">
    <property type="entry name" value="BH2638-like"/>
    <property type="match status" value="1"/>
</dbReference>
<organism>
    <name type="scientific">Bacillus cereus (strain 03BB102)</name>
    <dbReference type="NCBI Taxonomy" id="572264"/>
    <lineage>
        <taxon>Bacteria</taxon>
        <taxon>Bacillati</taxon>
        <taxon>Bacillota</taxon>
        <taxon>Bacilli</taxon>
        <taxon>Bacillales</taxon>
        <taxon>Bacillaceae</taxon>
        <taxon>Bacillus</taxon>
        <taxon>Bacillus cereus group</taxon>
    </lineage>
</organism>
<feature type="chain" id="PRO_1000149544" description="UPF0223 protein BCA_4066">
    <location>
        <begin position="1"/>
        <end position="89"/>
    </location>
</feature>
<evidence type="ECO:0000255" key="1">
    <source>
        <dbReference type="HAMAP-Rule" id="MF_01041"/>
    </source>
</evidence>
<gene>
    <name type="ordered locus">BCA_4066</name>
</gene>
<proteinExistence type="inferred from homology"/>
<comment type="similarity">
    <text evidence="1">Belongs to the UPF0223 family.</text>
</comment>
<reference key="1">
    <citation type="submission" date="2009-02" db="EMBL/GenBank/DDBJ databases">
        <title>Genome sequence of Bacillus cereus 03BB102.</title>
        <authorList>
            <person name="Dodson R.J."/>
            <person name="Jackson P."/>
            <person name="Munk A.C."/>
            <person name="Brettin T."/>
            <person name="Bruce D."/>
            <person name="Detter C."/>
            <person name="Tapia R."/>
            <person name="Han C."/>
            <person name="Sutton G."/>
            <person name="Sims D."/>
        </authorList>
    </citation>
    <scope>NUCLEOTIDE SEQUENCE [LARGE SCALE GENOMIC DNA]</scope>
    <source>
        <strain>03BB102</strain>
    </source>
</reference>
<sequence>MEYQYPLDYDWSNEEMVTMVKFYEAIEKAYEKGIIREELMELYRRFKEIVPSKAEEKKIDKEFQEVSGYSIYRAIQRAKEIEEQKLVKM</sequence>